<reference key="1">
    <citation type="journal article" date="1996" name="Science">
        <title>Complete genome sequence of the methanogenic archaeon, Methanococcus jannaschii.</title>
        <authorList>
            <person name="Bult C.J."/>
            <person name="White O."/>
            <person name="Olsen G.J."/>
            <person name="Zhou L."/>
            <person name="Fleischmann R.D."/>
            <person name="Sutton G.G."/>
            <person name="Blake J.A."/>
            <person name="FitzGerald L.M."/>
            <person name="Clayton R.A."/>
            <person name="Gocayne J.D."/>
            <person name="Kerlavage A.R."/>
            <person name="Dougherty B.A."/>
            <person name="Tomb J.-F."/>
            <person name="Adams M.D."/>
            <person name="Reich C.I."/>
            <person name="Overbeek R."/>
            <person name="Kirkness E.F."/>
            <person name="Weinstock K.G."/>
            <person name="Merrick J.M."/>
            <person name="Glodek A."/>
            <person name="Scott J.L."/>
            <person name="Geoghagen N.S.M."/>
            <person name="Weidman J.F."/>
            <person name="Fuhrmann J.L."/>
            <person name="Nguyen D."/>
            <person name="Utterback T.R."/>
            <person name="Kelley J.M."/>
            <person name="Peterson J.D."/>
            <person name="Sadow P.W."/>
            <person name="Hanna M.C."/>
            <person name="Cotton M.D."/>
            <person name="Roberts K.M."/>
            <person name="Hurst M.A."/>
            <person name="Kaine B.P."/>
            <person name="Borodovsky M."/>
            <person name="Klenk H.-P."/>
            <person name="Fraser C.M."/>
            <person name="Smith H.O."/>
            <person name="Woese C.R."/>
            <person name="Venter J.C."/>
        </authorList>
    </citation>
    <scope>NUCLEOTIDE SEQUENCE [LARGE SCALE GENOMIC DNA]</scope>
    <source>
        <strain>ATCC 43067 / DSM 2661 / JAL-1 / JCM 10045 / NBRC 100440</strain>
    </source>
</reference>
<reference key="2">
    <citation type="journal article" date="1997" name="Science">
        <title>Evidence for a family of archaeal ATPases.</title>
        <authorList>
            <person name="Koonin E.V."/>
        </authorList>
    </citation>
    <scope>SIMILARITY</scope>
</reference>
<evidence type="ECO:0000255" key="1"/>
<evidence type="ECO:0000305" key="2"/>
<comment type="similarity">
    <text evidence="2">Belongs to the archaeal ATPase family.</text>
</comment>
<organism>
    <name type="scientific">Methanocaldococcus jannaschii (strain ATCC 43067 / DSM 2661 / JAL-1 / JCM 10045 / NBRC 100440)</name>
    <name type="common">Methanococcus jannaschii</name>
    <dbReference type="NCBI Taxonomy" id="243232"/>
    <lineage>
        <taxon>Archaea</taxon>
        <taxon>Methanobacteriati</taxon>
        <taxon>Methanobacteriota</taxon>
        <taxon>Methanomada group</taxon>
        <taxon>Methanococci</taxon>
        <taxon>Methanococcales</taxon>
        <taxon>Methanocaldococcaceae</taxon>
        <taxon>Methanocaldococcus</taxon>
    </lineage>
</organism>
<keyword id="KW-0067">ATP-binding</keyword>
<keyword id="KW-0547">Nucleotide-binding</keyword>
<keyword id="KW-1185">Reference proteome</keyword>
<protein>
    <recommendedName>
        <fullName>Uncharacterized ATP-binding protein MJ0074</fullName>
    </recommendedName>
</protein>
<proteinExistence type="inferred from homology"/>
<gene>
    <name type="ordered locus">MJ0074</name>
</gene>
<feature type="chain" id="PRO_0000184665" description="Uncharacterized ATP-binding protein MJ0074">
    <location>
        <begin position="1"/>
        <end position="358"/>
    </location>
</feature>
<feature type="binding site" evidence="1">
    <location>
        <begin position="29"/>
        <end position="36"/>
    </location>
    <ligand>
        <name>ATP</name>
        <dbReference type="ChEBI" id="CHEBI:30616"/>
    </ligand>
</feature>
<accession>Q60380</accession>
<sequence>MKFFDREKEIAEILHILNREPDDVYFIYGPINSGKTALINEIINNRLDKDKYVVFYFDLREIFISKYDDFIEVLFEEYEGNKKPVEIIKSLIKDVPSLCGIPAPKNTLEEILKKKTTKNVFRYITKVLMDIKKEGKQPILIIDELQKIGDMKINGFLIYELFNYFVSLTKHKHLCHVFCLSSDSLFIERVYNEAMLDGRAKYLLVDDFDKETALKFMDFLAKENNISLTNEDKELIYNYVGGKPKDIKYVVEESNFKDLKEVLDYLLNDEISKLDMFLEILDYSKPRVEVGNEVIEINKEDIIKALRLFKDKYEIPKKDIPTPVYVYLVKENILFLNPQKRILKPQSYLVWNAIKRLL</sequence>
<name>Y074_METJA</name>
<dbReference type="EMBL" id="L77117">
    <property type="protein sequence ID" value="AAB98056.1"/>
    <property type="molecule type" value="Genomic_DNA"/>
</dbReference>
<dbReference type="PIR" id="B64309">
    <property type="entry name" value="B64309"/>
</dbReference>
<dbReference type="RefSeq" id="WP_010869566.1">
    <property type="nucleotide sequence ID" value="NC_000909.1"/>
</dbReference>
<dbReference type="SMR" id="Q60380"/>
<dbReference type="PaxDb" id="243232-MJ_0074"/>
<dbReference type="EnsemblBacteria" id="AAB98056">
    <property type="protein sequence ID" value="AAB98056"/>
    <property type="gene ID" value="MJ_0074"/>
</dbReference>
<dbReference type="GeneID" id="1450913"/>
<dbReference type="KEGG" id="mja:MJ_0074"/>
<dbReference type="eggNOG" id="arCOG03407">
    <property type="taxonomic scope" value="Archaea"/>
</dbReference>
<dbReference type="HOGENOM" id="CLU_068608_0_0_2"/>
<dbReference type="InParanoid" id="Q60380"/>
<dbReference type="OrthoDB" id="65289at2157"/>
<dbReference type="PhylomeDB" id="Q60380"/>
<dbReference type="Proteomes" id="UP000000805">
    <property type="component" value="Chromosome"/>
</dbReference>
<dbReference type="GO" id="GO:0005524">
    <property type="term" value="F:ATP binding"/>
    <property type="evidence" value="ECO:0007669"/>
    <property type="project" value="UniProtKB-KW"/>
</dbReference>
<dbReference type="GO" id="GO:0016887">
    <property type="term" value="F:ATP hydrolysis activity"/>
    <property type="evidence" value="ECO:0007669"/>
    <property type="project" value="InterPro"/>
</dbReference>
<dbReference type="CDD" id="cd00009">
    <property type="entry name" value="AAA"/>
    <property type="match status" value="1"/>
</dbReference>
<dbReference type="Gene3D" id="3.40.50.300">
    <property type="entry name" value="P-loop containing nucleotide triphosphate hydrolases"/>
    <property type="match status" value="1"/>
</dbReference>
<dbReference type="Gene3D" id="1.10.10.10">
    <property type="entry name" value="Winged helix-like DNA-binding domain superfamily/Winged helix DNA-binding domain"/>
    <property type="match status" value="1"/>
</dbReference>
<dbReference type="InterPro" id="IPR003593">
    <property type="entry name" value="AAA+_ATPase"/>
</dbReference>
<dbReference type="InterPro" id="IPR011579">
    <property type="entry name" value="ATPase_dom"/>
</dbReference>
<dbReference type="InterPro" id="IPR049081">
    <property type="entry name" value="MJ1010-like_2nd"/>
</dbReference>
<dbReference type="InterPro" id="IPR027417">
    <property type="entry name" value="P-loop_NTPase"/>
</dbReference>
<dbReference type="InterPro" id="IPR036388">
    <property type="entry name" value="WH-like_DNA-bd_sf"/>
</dbReference>
<dbReference type="PANTHER" id="PTHR34301:SF8">
    <property type="entry name" value="ATPASE DOMAIN-CONTAINING PROTEIN"/>
    <property type="match status" value="1"/>
</dbReference>
<dbReference type="PANTHER" id="PTHR34301">
    <property type="entry name" value="DNA-BINDING PROTEIN-RELATED"/>
    <property type="match status" value="1"/>
</dbReference>
<dbReference type="Pfam" id="PF01637">
    <property type="entry name" value="ATPase_2"/>
    <property type="match status" value="1"/>
</dbReference>
<dbReference type="Pfam" id="PF21690">
    <property type="entry name" value="MJ1010-like_2nd"/>
    <property type="match status" value="1"/>
</dbReference>
<dbReference type="SMART" id="SM00382">
    <property type="entry name" value="AAA"/>
    <property type="match status" value="1"/>
</dbReference>
<dbReference type="SUPFAM" id="SSF52540">
    <property type="entry name" value="P-loop containing nucleoside triphosphate hydrolases"/>
    <property type="match status" value="1"/>
</dbReference>